<feature type="chain" id="PRO_0000444944" description="Maleylacetate reductase">
    <location>
        <begin position="1"/>
        <end position="352"/>
    </location>
</feature>
<feature type="binding site" evidence="1">
    <location>
        <begin position="93"/>
        <end position="94"/>
    </location>
    <ligand>
        <name>NAD(+)</name>
        <dbReference type="ChEBI" id="CHEBI:57540"/>
    </ligand>
</feature>
<feature type="binding site" evidence="1">
    <location>
        <begin position="115"/>
        <end position="119"/>
    </location>
    <ligand>
        <name>NAD(+)</name>
        <dbReference type="ChEBI" id="CHEBI:57540"/>
    </ligand>
</feature>
<accession>Q5W9E3</accession>
<accession>D4Z6Y7</accession>
<protein>
    <recommendedName>
        <fullName evidence="3">Maleylacetate reductase</fullName>
        <shortName evidence="3">MA reductase</shortName>
        <ecNumber evidence="2">1.3.1.-</ecNumber>
    </recommendedName>
</protein>
<comment type="function">
    <text evidence="2">Catalyzes the NADH-dependent reduction of maleylacetate to beta-ketoadipate, a step in the degradation of gamma-hexachlorocyclohexane (gamma-HCH or lindane). Has an essential role in this assimilation pathway that allows S.japonicum UT26 to grow on gamma-HCH as the sole source of carbon and energy.</text>
</comment>
<comment type="catalytic activity">
    <reaction evidence="2">
        <text>3-oxoadipate + NAD(+) = maleylacetate + NADH + H(+)</text>
        <dbReference type="Rhea" id="RHEA:16981"/>
        <dbReference type="ChEBI" id="CHEBI:15378"/>
        <dbReference type="ChEBI" id="CHEBI:15775"/>
        <dbReference type="ChEBI" id="CHEBI:16468"/>
        <dbReference type="ChEBI" id="CHEBI:57540"/>
        <dbReference type="ChEBI" id="CHEBI:57945"/>
    </reaction>
</comment>
<comment type="cofactor">
    <text evidence="4">The maleylacetate reductase family of enzymes does not require any metal ion for activity, despite being related to the family III metal-dependent polyol dehydrogenases.</text>
</comment>
<comment type="pathway">
    <text evidence="2">Xenobiotic degradation; gamma-hexachlorocyclohexane degradation.</text>
</comment>
<comment type="disruption phenotype">
    <text evidence="2">Cells lacking this gene lose the ability to grow on gamma-HCH; growth is restored when a plasmid containing the linF gene is introduced.</text>
</comment>
<comment type="similarity">
    <text evidence="4">Belongs to the iron-containing alcohol dehydrogenase family.</text>
</comment>
<dbReference type="EC" id="1.3.1.-" evidence="2"/>
<dbReference type="EMBL" id="AB177985">
    <property type="protein sequence ID" value="BAD66863.1"/>
    <property type="molecule type" value="Genomic_DNA"/>
</dbReference>
<dbReference type="EMBL" id="AP010804">
    <property type="protein sequence ID" value="BAI98845.1"/>
    <property type="molecule type" value="Genomic_DNA"/>
</dbReference>
<dbReference type="RefSeq" id="WP_007687859.1">
    <property type="nucleotide sequence ID" value="NC_014013.1"/>
</dbReference>
<dbReference type="SMR" id="Q5W9E3"/>
<dbReference type="STRING" id="452662.SJA_C2-04820"/>
<dbReference type="GeneID" id="29275480"/>
<dbReference type="KEGG" id="sjp:SJA_C2-04820"/>
<dbReference type="eggNOG" id="COG1454">
    <property type="taxonomic scope" value="Bacteria"/>
</dbReference>
<dbReference type="HOGENOM" id="CLU_007207_0_1_5"/>
<dbReference type="BioCyc" id="MetaCyc:MONOMER-14639"/>
<dbReference type="UniPathway" id="UPA00689"/>
<dbReference type="Proteomes" id="UP000007753">
    <property type="component" value="Chromosome 2"/>
</dbReference>
<dbReference type="GO" id="GO:0004022">
    <property type="term" value="F:alcohol dehydrogenase (NAD+) activity"/>
    <property type="evidence" value="ECO:0007669"/>
    <property type="project" value="TreeGrafter"/>
</dbReference>
<dbReference type="GO" id="GO:0018506">
    <property type="term" value="F:maleylacetate reductase activity"/>
    <property type="evidence" value="ECO:0000314"/>
    <property type="project" value="UniProtKB"/>
</dbReference>
<dbReference type="GO" id="GO:0046872">
    <property type="term" value="F:metal ion binding"/>
    <property type="evidence" value="ECO:0007669"/>
    <property type="project" value="InterPro"/>
</dbReference>
<dbReference type="GO" id="GO:0019497">
    <property type="term" value="P:hexachlorocyclohexane metabolic process"/>
    <property type="evidence" value="ECO:0000315"/>
    <property type="project" value="UniProtKB"/>
</dbReference>
<dbReference type="CDD" id="cd08177">
    <property type="entry name" value="MAR"/>
    <property type="match status" value="1"/>
</dbReference>
<dbReference type="FunFam" id="1.20.1090.10:FF:000010">
    <property type="entry name" value="Maleylacetate reductase 1"/>
    <property type="match status" value="1"/>
</dbReference>
<dbReference type="FunFam" id="3.40.50.1970:FF:000015">
    <property type="entry name" value="Maleylacetate reductase 1"/>
    <property type="match status" value="1"/>
</dbReference>
<dbReference type="Gene3D" id="3.40.50.1970">
    <property type="match status" value="1"/>
</dbReference>
<dbReference type="Gene3D" id="1.20.1090.10">
    <property type="entry name" value="Dehydroquinate synthase-like - alpha domain"/>
    <property type="match status" value="1"/>
</dbReference>
<dbReference type="InterPro" id="IPR001670">
    <property type="entry name" value="ADH_Fe/GldA"/>
</dbReference>
<dbReference type="InterPro" id="IPR056798">
    <property type="entry name" value="ADH_Fe_C"/>
</dbReference>
<dbReference type="InterPro" id="IPR039697">
    <property type="entry name" value="Alcohol_dehydrogenase_Fe"/>
</dbReference>
<dbReference type="InterPro" id="IPR034786">
    <property type="entry name" value="MAR"/>
</dbReference>
<dbReference type="PANTHER" id="PTHR11496">
    <property type="entry name" value="ALCOHOL DEHYDROGENASE"/>
    <property type="match status" value="1"/>
</dbReference>
<dbReference type="PANTHER" id="PTHR11496:SF102">
    <property type="entry name" value="ALCOHOL DEHYDROGENASE 4"/>
    <property type="match status" value="1"/>
</dbReference>
<dbReference type="Pfam" id="PF25137">
    <property type="entry name" value="ADH_Fe_C"/>
    <property type="match status" value="1"/>
</dbReference>
<dbReference type="Pfam" id="PF00465">
    <property type="entry name" value="Fe-ADH"/>
    <property type="match status" value="1"/>
</dbReference>
<dbReference type="SUPFAM" id="SSF56796">
    <property type="entry name" value="Dehydroquinate synthase-like"/>
    <property type="match status" value="1"/>
</dbReference>
<evidence type="ECO:0000250" key="1">
    <source>
        <dbReference type="UniProtKB" id="P0A9S1"/>
    </source>
</evidence>
<evidence type="ECO:0000269" key="2">
    <source>
    </source>
</evidence>
<evidence type="ECO:0000303" key="3">
    <source>
    </source>
</evidence>
<evidence type="ECO:0000305" key="4"/>
<evidence type="ECO:0000312" key="5">
    <source>
        <dbReference type="EMBL" id="BAD66863.1"/>
    </source>
</evidence>
<evidence type="ECO:0000312" key="6">
    <source>
        <dbReference type="EMBL" id="BAI98845.1"/>
    </source>
</evidence>
<organism>
    <name type="scientific">Sphingobium indicum (strain DSM 16413 / CCM 7287 / MTCC 6362 / UT26 / NBRC 101211 / UT26S)</name>
    <name type="common">Sphingobium japonicum</name>
    <dbReference type="NCBI Taxonomy" id="452662"/>
    <lineage>
        <taxon>Bacteria</taxon>
        <taxon>Pseudomonadati</taxon>
        <taxon>Pseudomonadota</taxon>
        <taxon>Alphaproteobacteria</taxon>
        <taxon>Sphingomonadales</taxon>
        <taxon>Sphingomonadaceae</taxon>
        <taxon>Sphingobium</taxon>
    </lineage>
</organism>
<keyword id="KW-0520">NAD</keyword>
<keyword id="KW-0560">Oxidoreductase</keyword>
<keyword id="KW-1185">Reference proteome</keyword>
<sequence length="352" mass="36332">MQFVYDPLPYRVIFGAGSVRRVADELSHVGSRALVLSTPEQAGSAQELAATLGDKAVGLFSKAVMHVPVATVDAAAAVARELDADCTVAIGGGSTVGLAKALSLRLDLPSLVVPTTYAGSEVTPIWGLTEDGIKTTGRDKKVLPKVVVYDPDLTLSLPAEMSIASGLNAIAHAMEGLYAFDGNPIVSLMAEESIRALARSLPLIKADPTDAKARGDALYGCWLAGSVLGAASVALHHKLCHTLGGTFDMPHAQTHTAVLPHAIAYNAPSVPEAMERASRALGGGDPATKLYELAVGLGAEMSLAKLGMPKDGIAKAAALAVANPYPNPRPITEEGIVQLLSRAVEGLPPITA</sequence>
<reference key="1">
    <citation type="journal article" date="2005" name="J. Bacteriol.">
        <title>Identification and characterization of genes involved in the downstream degradation pathway of gamma-hexachlorocyclohexane in Sphingomonas paucimobilis UT26.</title>
        <authorList>
            <person name="Endo R."/>
            <person name="Kamakura M."/>
            <person name="Miyauchi K."/>
            <person name="Fukuda M."/>
            <person name="Ohtsubo Y."/>
            <person name="Tsuda M."/>
            <person name="Nagata Y."/>
        </authorList>
    </citation>
    <scope>NUCLEOTIDE SEQUENCE [GENOMIC DNA]</scope>
    <scope>FUNCTION</scope>
    <scope>CATALYTIC ACTIVITY</scope>
    <scope>DISRUPTION PHENOTYPE</scope>
    <scope>PATHWAY</scope>
    <source>
        <strain>DSM 16413 / CCM 7287 / MTCC 6362 / UT26 / NBRC 101211 / UT26S</strain>
    </source>
</reference>
<reference key="2">
    <citation type="journal article" date="2010" name="J. Bacteriol.">
        <title>Complete genome sequence of the representative gamma-hexachlorocyclohexane-degrading bacterium Sphingobium japonicum UT26.</title>
        <authorList>
            <person name="Nagata Y."/>
            <person name="Ohtsubo Y."/>
            <person name="Endo R."/>
            <person name="Ichikawa N."/>
            <person name="Ankai A."/>
            <person name="Oguchi A."/>
            <person name="Fukui S."/>
            <person name="Fujita N."/>
            <person name="Tsuda M."/>
        </authorList>
    </citation>
    <scope>NUCLEOTIDE SEQUENCE [LARGE SCALE GENOMIC DNA]</scope>
    <source>
        <strain>DSM 16413 / CCM 7287 / MTCC 6362 / UT26 / NBRC 101211 / UT26S</strain>
    </source>
</reference>
<gene>
    <name evidence="3 5" type="primary">linF</name>
    <name evidence="6" type="ordered locus">SJA_C2-04820</name>
</gene>
<proteinExistence type="evidence at protein level"/>
<name>LINF_SPHIU</name>